<keyword id="KW-0143">Chaperone</keyword>
<keyword id="KW-0963">Cytoplasm</keyword>
<keyword id="KW-0843">Virulence</keyword>
<proteinExistence type="inferred from homology"/>
<name>SICP_SALPA</name>
<gene>
    <name type="primary">sicP</name>
    <name type="ordered locus">SPA2737</name>
</gene>
<protein>
    <recommendedName>
        <fullName>Chaperone protein SicP</fullName>
    </recommendedName>
</protein>
<feature type="chain" id="PRO_0000097752" description="Chaperone protein SicP">
    <location>
        <begin position="1"/>
        <end position="116"/>
    </location>
</feature>
<reference key="1">
    <citation type="journal article" date="2004" name="Nat. Genet.">
        <title>Comparison of genome degradation in Paratyphi A and Typhi, human-restricted serovars of Salmonella enterica that cause typhoid.</title>
        <authorList>
            <person name="McClelland M."/>
            <person name="Sanderson K.E."/>
            <person name="Clifton S.W."/>
            <person name="Latreille P."/>
            <person name="Porwollik S."/>
            <person name="Sabo A."/>
            <person name="Meyer R."/>
            <person name="Bieri T."/>
            <person name="Ozersky P."/>
            <person name="McLellan M."/>
            <person name="Harkins C.R."/>
            <person name="Wang C."/>
            <person name="Nguyen C."/>
            <person name="Berghoff A."/>
            <person name="Elliott G."/>
            <person name="Kohlberg S."/>
            <person name="Strong C."/>
            <person name="Du F."/>
            <person name="Carter J."/>
            <person name="Kremizki C."/>
            <person name="Layman D."/>
            <person name="Leonard S."/>
            <person name="Sun H."/>
            <person name="Fulton L."/>
            <person name="Nash W."/>
            <person name="Miner T."/>
            <person name="Minx P."/>
            <person name="Delehaunty K."/>
            <person name="Fronick C."/>
            <person name="Magrini V."/>
            <person name="Nhan M."/>
            <person name="Warren W."/>
            <person name="Florea L."/>
            <person name="Spieth J."/>
            <person name="Wilson R.K."/>
        </authorList>
    </citation>
    <scope>NUCLEOTIDE SEQUENCE [LARGE SCALE GENOMIC DNA]</scope>
    <source>
        <strain>ATCC 9150 / SARB42</strain>
    </source>
</reference>
<evidence type="ECO:0000250" key="1"/>
<evidence type="ECO:0000305" key="2"/>
<organism>
    <name type="scientific">Salmonella paratyphi A (strain ATCC 9150 / SARB42)</name>
    <dbReference type="NCBI Taxonomy" id="295319"/>
    <lineage>
        <taxon>Bacteria</taxon>
        <taxon>Pseudomonadati</taxon>
        <taxon>Pseudomonadota</taxon>
        <taxon>Gammaproteobacteria</taxon>
        <taxon>Enterobacterales</taxon>
        <taxon>Enterobacteriaceae</taxon>
        <taxon>Salmonella</taxon>
    </lineage>
</organism>
<sequence>MGLPLTFDDNNQCLLLLDSDIFTSIEAKDDIWLLNGMIIPLSPVCGDSIWRQIMVINGELAANNEGTLAYIDAAETLLFIHAITDLTNIYHIISQLESFVNKQEALKNILQEYAKV</sequence>
<comment type="function">
    <text evidence="1">Molecular chaperone required for SptP stabilization and secretion.</text>
</comment>
<comment type="subcellular location">
    <subcellularLocation>
        <location evidence="2">Cytoplasm</location>
    </subcellularLocation>
</comment>
<comment type="similarity">
    <text evidence="2">Belongs to the SicP family.</text>
</comment>
<accession>Q5PEA8</accession>
<dbReference type="EMBL" id="CP000026">
    <property type="protein sequence ID" value="AAV78594.1"/>
    <property type="molecule type" value="Genomic_DNA"/>
</dbReference>
<dbReference type="SMR" id="Q5PEA8"/>
<dbReference type="KEGG" id="spt:SPA2737"/>
<dbReference type="HOGENOM" id="CLU_126979_0_0_6"/>
<dbReference type="Proteomes" id="UP000008185">
    <property type="component" value="Chromosome"/>
</dbReference>
<dbReference type="GO" id="GO:0005737">
    <property type="term" value="C:cytoplasm"/>
    <property type="evidence" value="ECO:0007669"/>
    <property type="project" value="UniProtKB-SubCell"/>
</dbReference>
<dbReference type="GO" id="GO:0030254">
    <property type="term" value="P:protein secretion by the type III secretion system"/>
    <property type="evidence" value="ECO:0007669"/>
    <property type="project" value="InterPro"/>
</dbReference>
<dbReference type="CDD" id="cd17021">
    <property type="entry name" value="T3SC_IA_SicP-like"/>
    <property type="match status" value="1"/>
</dbReference>
<dbReference type="Gene3D" id="3.30.1460.10">
    <property type="match status" value="1"/>
</dbReference>
<dbReference type="InterPro" id="IPR044530">
    <property type="entry name" value="SicP"/>
</dbReference>
<dbReference type="NCBIfam" id="NF011857">
    <property type="entry name" value="PRK15329.1"/>
    <property type="match status" value="1"/>
</dbReference>
<dbReference type="SUPFAM" id="SSF69635">
    <property type="entry name" value="Type III secretory system chaperone-like"/>
    <property type="match status" value="1"/>
</dbReference>